<reference key="1">
    <citation type="journal article" date="2003" name="Proc. Natl. Acad. Sci. U.S.A.">
        <title>The genome of Nanoarchaeum equitans: insights into early archaeal evolution and derived parasitism.</title>
        <authorList>
            <person name="Waters E."/>
            <person name="Hohn M.J."/>
            <person name="Ahel I."/>
            <person name="Graham D.E."/>
            <person name="Adams M.D."/>
            <person name="Barnstead M."/>
            <person name="Beeson K.Y."/>
            <person name="Bibbs L."/>
            <person name="Bolanos R."/>
            <person name="Keller M."/>
            <person name="Kretz K."/>
            <person name="Lin X."/>
            <person name="Mathur E."/>
            <person name="Ni J."/>
            <person name="Podar M."/>
            <person name="Richardson T."/>
            <person name="Sutton G.G."/>
            <person name="Simon M."/>
            <person name="Soell D."/>
            <person name="Stetter K.O."/>
            <person name="Short J.M."/>
            <person name="Noorderwier M."/>
        </authorList>
    </citation>
    <scope>NUCLEOTIDE SEQUENCE [LARGE SCALE GENOMIC DNA]</scope>
    <source>
        <strain>Kin4-M</strain>
    </source>
</reference>
<accession>P61151</accession>
<gene>
    <name type="ordered locus">NEQ431</name>
</gene>
<evidence type="ECO:0000255" key="1">
    <source>
        <dbReference type="HAMAP-Rule" id="MF_00582"/>
    </source>
</evidence>
<evidence type="ECO:0000256" key="2">
    <source>
        <dbReference type="SAM" id="MobiDB-lite"/>
    </source>
</evidence>
<name>Y431_NANEQ</name>
<feature type="chain" id="PRO_0000149237" description="UPF0215 protein NEQ431">
    <location>
        <begin position="1"/>
        <end position="198"/>
    </location>
</feature>
<feature type="region of interest" description="Disordered" evidence="2">
    <location>
        <begin position="179"/>
        <end position="198"/>
    </location>
</feature>
<dbReference type="EMBL" id="AE017199">
    <property type="protein sequence ID" value="AAR39276.1"/>
    <property type="molecule type" value="Genomic_DNA"/>
</dbReference>
<dbReference type="SMR" id="P61151"/>
<dbReference type="STRING" id="228908.NEQ431"/>
<dbReference type="EnsemblBacteria" id="AAR39276">
    <property type="protein sequence ID" value="AAR39276"/>
    <property type="gene ID" value="NEQ431"/>
</dbReference>
<dbReference type="KEGG" id="neq:NEQ431"/>
<dbReference type="HOGENOM" id="CLU_095956_1_0_2"/>
<dbReference type="Proteomes" id="UP000000578">
    <property type="component" value="Chromosome"/>
</dbReference>
<dbReference type="Gene3D" id="3.30.2170.10">
    <property type="entry name" value="archaeoglobus fulgidus dsm 4304 superfamily"/>
    <property type="match status" value="1"/>
</dbReference>
<dbReference type="HAMAP" id="MF_00582">
    <property type="entry name" value="UPF0215"/>
    <property type="match status" value="1"/>
</dbReference>
<dbReference type="InterPro" id="IPR002802">
    <property type="entry name" value="Endo_dU"/>
</dbReference>
<dbReference type="PANTHER" id="PTHR39518">
    <property type="entry name" value="UPF0215 PROTEIN MJ1150"/>
    <property type="match status" value="1"/>
</dbReference>
<dbReference type="PANTHER" id="PTHR39518:SF2">
    <property type="entry name" value="UPF0215 PROTEIN MJ1150"/>
    <property type="match status" value="1"/>
</dbReference>
<dbReference type="Pfam" id="PF01949">
    <property type="entry name" value="DUF99"/>
    <property type="match status" value="1"/>
</dbReference>
<dbReference type="PIRSF" id="PIRSF006380">
    <property type="entry name" value="UCP006380"/>
    <property type="match status" value="1"/>
</dbReference>
<sequence>MKKFARFIGIDDGYFVRNVHKKTKLIGAITKHTILDGVLSREITIDGDDVSEKIIDMIKNSNHYYQIRGIILYGITFAGFNIADVELIYKNLGLPIIIVMERPPKDIFYKAIEKYKPNGIELIKKAGPIYKTKTPFGYTYYQVYGIDKDTASNIINNLAIVSKIPEPARVAHMIARGVTKGDSSKPRAGGDSNPGPAG</sequence>
<comment type="similarity">
    <text evidence="1">Belongs to the UPF0215 family.</text>
</comment>
<organism>
    <name type="scientific">Nanoarchaeum equitans (strain Kin4-M)</name>
    <dbReference type="NCBI Taxonomy" id="228908"/>
    <lineage>
        <taxon>Archaea</taxon>
        <taxon>Nanobdellota</taxon>
        <taxon>Candidatus Nanoarchaeia</taxon>
        <taxon>Nanoarchaeales</taxon>
        <taxon>Nanoarchaeaceae</taxon>
        <taxon>Nanoarchaeum</taxon>
    </lineage>
</organism>
<protein>
    <recommendedName>
        <fullName evidence="1">UPF0215 protein NEQ431</fullName>
    </recommendedName>
</protein>
<keyword id="KW-1185">Reference proteome</keyword>
<proteinExistence type="inferred from homology"/>